<accession>C6C188</accession>
<feature type="chain" id="PRO_1000214442" description="Large ribosomal subunit protein uL2">
    <location>
        <begin position="1"/>
        <end position="276"/>
    </location>
</feature>
<feature type="region of interest" description="Disordered" evidence="2">
    <location>
        <begin position="29"/>
        <end position="54"/>
    </location>
</feature>
<feature type="region of interest" description="Disordered" evidence="2">
    <location>
        <begin position="224"/>
        <end position="276"/>
    </location>
</feature>
<feature type="compositionally biased region" description="Basic residues" evidence="2">
    <location>
        <begin position="256"/>
        <end position="276"/>
    </location>
</feature>
<organism>
    <name type="scientific">Maridesulfovibrio salexigens (strain ATCC 14822 / DSM 2638 / NCIMB 8403 / VKM B-1763)</name>
    <name type="common">Desulfovibrio salexigens</name>
    <dbReference type="NCBI Taxonomy" id="526222"/>
    <lineage>
        <taxon>Bacteria</taxon>
        <taxon>Pseudomonadati</taxon>
        <taxon>Thermodesulfobacteriota</taxon>
        <taxon>Desulfovibrionia</taxon>
        <taxon>Desulfovibrionales</taxon>
        <taxon>Desulfovibrionaceae</taxon>
        <taxon>Maridesulfovibrio</taxon>
    </lineage>
</organism>
<evidence type="ECO:0000255" key="1">
    <source>
        <dbReference type="HAMAP-Rule" id="MF_01320"/>
    </source>
</evidence>
<evidence type="ECO:0000256" key="2">
    <source>
        <dbReference type="SAM" id="MobiDB-lite"/>
    </source>
</evidence>
<evidence type="ECO:0000305" key="3"/>
<gene>
    <name evidence="1" type="primary">rplB</name>
    <name type="ordered locus">Desal_1188</name>
</gene>
<name>RL2_MARSD</name>
<comment type="function">
    <text evidence="1">One of the primary rRNA binding proteins. Required for association of the 30S and 50S subunits to form the 70S ribosome, for tRNA binding and peptide bond formation. It has been suggested to have peptidyltransferase activity; this is somewhat controversial. Makes several contacts with the 16S rRNA in the 70S ribosome.</text>
</comment>
<comment type="subunit">
    <text evidence="1">Part of the 50S ribosomal subunit. Forms a bridge to the 30S subunit in the 70S ribosome.</text>
</comment>
<comment type="similarity">
    <text evidence="1">Belongs to the universal ribosomal protein uL2 family.</text>
</comment>
<reference key="1">
    <citation type="submission" date="2009-06" db="EMBL/GenBank/DDBJ databases">
        <title>Complete sequence of Desulfovibrio salexigens DSM 2638.</title>
        <authorList>
            <consortium name="US DOE Joint Genome Institute"/>
            <person name="Lucas S."/>
            <person name="Copeland A."/>
            <person name="Lapidus A."/>
            <person name="Glavina del Rio T."/>
            <person name="Tice H."/>
            <person name="Bruce D."/>
            <person name="Goodwin L."/>
            <person name="Pitluck S."/>
            <person name="Munk A.C."/>
            <person name="Brettin T."/>
            <person name="Detter J.C."/>
            <person name="Han C."/>
            <person name="Tapia R."/>
            <person name="Larimer F."/>
            <person name="Land M."/>
            <person name="Hauser L."/>
            <person name="Kyrpides N."/>
            <person name="Anderson I."/>
            <person name="Wall J.D."/>
            <person name="Arkin A.P."/>
            <person name="Dehal P."/>
            <person name="Chivian D."/>
            <person name="Giles B."/>
            <person name="Hazen T.C."/>
        </authorList>
    </citation>
    <scope>NUCLEOTIDE SEQUENCE [LARGE SCALE GENOMIC DNA]</scope>
    <source>
        <strain>ATCC 14822 / DSM 2638 / NCIMB 8403 / VKM B-1763</strain>
    </source>
</reference>
<proteinExistence type="inferred from homology"/>
<sequence>MATRKLKPTSPGRRFQTISTFEEITKSTPEKSLTKGLTKKAGRNNNGRVTSRRRGGGVKRLYRIIDFKRNKVEVPATVASIEYDPNRSARIALLHYADGEKRYILCPVGLNKGDKILAGEKADIKPGNALLLKNIPVGTIVHNIELYPGKGGQFCRAAGTYAQLIAKEGKYALLRMPSGEVRKVLATCCATVGQVGNIHHENITLGKAGRNRWLGRRPKVRGVAMNPIDHPLGGGEGRSSGGRHPVSPWGMPAKGYKTRSKKKPSSKLIVKRRGQR</sequence>
<protein>
    <recommendedName>
        <fullName evidence="1">Large ribosomal subunit protein uL2</fullName>
    </recommendedName>
    <alternativeName>
        <fullName evidence="3">50S ribosomal protein L2</fullName>
    </alternativeName>
</protein>
<keyword id="KW-1185">Reference proteome</keyword>
<keyword id="KW-0687">Ribonucleoprotein</keyword>
<keyword id="KW-0689">Ribosomal protein</keyword>
<keyword id="KW-0694">RNA-binding</keyword>
<keyword id="KW-0699">rRNA-binding</keyword>
<dbReference type="EMBL" id="CP001649">
    <property type="protein sequence ID" value="ACS79251.1"/>
    <property type="molecule type" value="Genomic_DNA"/>
</dbReference>
<dbReference type="RefSeq" id="WP_015851070.1">
    <property type="nucleotide sequence ID" value="NC_012881.1"/>
</dbReference>
<dbReference type="SMR" id="C6C188"/>
<dbReference type="STRING" id="526222.Desal_1188"/>
<dbReference type="KEGG" id="dsa:Desal_1188"/>
<dbReference type="eggNOG" id="COG0090">
    <property type="taxonomic scope" value="Bacteria"/>
</dbReference>
<dbReference type="HOGENOM" id="CLU_036235_2_1_7"/>
<dbReference type="OrthoDB" id="9778722at2"/>
<dbReference type="Proteomes" id="UP000002601">
    <property type="component" value="Chromosome"/>
</dbReference>
<dbReference type="GO" id="GO:0015934">
    <property type="term" value="C:large ribosomal subunit"/>
    <property type="evidence" value="ECO:0007669"/>
    <property type="project" value="InterPro"/>
</dbReference>
<dbReference type="GO" id="GO:0019843">
    <property type="term" value="F:rRNA binding"/>
    <property type="evidence" value="ECO:0007669"/>
    <property type="project" value="UniProtKB-UniRule"/>
</dbReference>
<dbReference type="GO" id="GO:0003735">
    <property type="term" value="F:structural constituent of ribosome"/>
    <property type="evidence" value="ECO:0007669"/>
    <property type="project" value="InterPro"/>
</dbReference>
<dbReference type="GO" id="GO:0016740">
    <property type="term" value="F:transferase activity"/>
    <property type="evidence" value="ECO:0007669"/>
    <property type="project" value="InterPro"/>
</dbReference>
<dbReference type="GO" id="GO:0002181">
    <property type="term" value="P:cytoplasmic translation"/>
    <property type="evidence" value="ECO:0007669"/>
    <property type="project" value="TreeGrafter"/>
</dbReference>
<dbReference type="FunFam" id="2.30.30.30:FF:000001">
    <property type="entry name" value="50S ribosomal protein L2"/>
    <property type="match status" value="1"/>
</dbReference>
<dbReference type="FunFam" id="2.40.50.140:FF:000003">
    <property type="entry name" value="50S ribosomal protein L2"/>
    <property type="match status" value="1"/>
</dbReference>
<dbReference type="FunFam" id="4.10.950.10:FF:000001">
    <property type="entry name" value="50S ribosomal protein L2"/>
    <property type="match status" value="1"/>
</dbReference>
<dbReference type="Gene3D" id="2.30.30.30">
    <property type="match status" value="1"/>
</dbReference>
<dbReference type="Gene3D" id="2.40.50.140">
    <property type="entry name" value="Nucleic acid-binding proteins"/>
    <property type="match status" value="1"/>
</dbReference>
<dbReference type="Gene3D" id="4.10.950.10">
    <property type="entry name" value="Ribosomal protein L2, domain 3"/>
    <property type="match status" value="1"/>
</dbReference>
<dbReference type="HAMAP" id="MF_01320_B">
    <property type="entry name" value="Ribosomal_uL2_B"/>
    <property type="match status" value="1"/>
</dbReference>
<dbReference type="InterPro" id="IPR012340">
    <property type="entry name" value="NA-bd_OB-fold"/>
</dbReference>
<dbReference type="InterPro" id="IPR014722">
    <property type="entry name" value="Rib_uL2_dom2"/>
</dbReference>
<dbReference type="InterPro" id="IPR002171">
    <property type="entry name" value="Ribosomal_uL2"/>
</dbReference>
<dbReference type="InterPro" id="IPR005880">
    <property type="entry name" value="Ribosomal_uL2_bac/org-type"/>
</dbReference>
<dbReference type="InterPro" id="IPR022669">
    <property type="entry name" value="Ribosomal_uL2_C"/>
</dbReference>
<dbReference type="InterPro" id="IPR022671">
    <property type="entry name" value="Ribosomal_uL2_CS"/>
</dbReference>
<dbReference type="InterPro" id="IPR014726">
    <property type="entry name" value="Ribosomal_uL2_dom3"/>
</dbReference>
<dbReference type="InterPro" id="IPR022666">
    <property type="entry name" value="Ribosomal_uL2_RNA-bd_dom"/>
</dbReference>
<dbReference type="InterPro" id="IPR008991">
    <property type="entry name" value="Translation_prot_SH3-like_sf"/>
</dbReference>
<dbReference type="NCBIfam" id="TIGR01171">
    <property type="entry name" value="rplB_bact"/>
    <property type="match status" value="1"/>
</dbReference>
<dbReference type="PANTHER" id="PTHR13691:SF5">
    <property type="entry name" value="LARGE RIBOSOMAL SUBUNIT PROTEIN UL2M"/>
    <property type="match status" value="1"/>
</dbReference>
<dbReference type="PANTHER" id="PTHR13691">
    <property type="entry name" value="RIBOSOMAL PROTEIN L2"/>
    <property type="match status" value="1"/>
</dbReference>
<dbReference type="Pfam" id="PF00181">
    <property type="entry name" value="Ribosomal_L2"/>
    <property type="match status" value="1"/>
</dbReference>
<dbReference type="Pfam" id="PF03947">
    <property type="entry name" value="Ribosomal_L2_C"/>
    <property type="match status" value="1"/>
</dbReference>
<dbReference type="PIRSF" id="PIRSF002158">
    <property type="entry name" value="Ribosomal_L2"/>
    <property type="match status" value="1"/>
</dbReference>
<dbReference type="SMART" id="SM01383">
    <property type="entry name" value="Ribosomal_L2"/>
    <property type="match status" value="1"/>
</dbReference>
<dbReference type="SMART" id="SM01382">
    <property type="entry name" value="Ribosomal_L2_C"/>
    <property type="match status" value="1"/>
</dbReference>
<dbReference type="SUPFAM" id="SSF50249">
    <property type="entry name" value="Nucleic acid-binding proteins"/>
    <property type="match status" value="1"/>
</dbReference>
<dbReference type="SUPFAM" id="SSF50104">
    <property type="entry name" value="Translation proteins SH3-like domain"/>
    <property type="match status" value="1"/>
</dbReference>
<dbReference type="PROSITE" id="PS00467">
    <property type="entry name" value="RIBOSOMAL_L2"/>
    <property type="match status" value="1"/>
</dbReference>